<gene>
    <name type="ordered locus">Patl_0263</name>
</gene>
<proteinExistence type="inferred from homology"/>
<evidence type="ECO:0000255" key="1">
    <source>
        <dbReference type="HAMAP-Rule" id="MF_01361"/>
    </source>
</evidence>
<evidence type="ECO:0000305" key="2"/>
<feature type="chain" id="PRO_5000125027" description="UPF0391 membrane protein Patl_0263">
    <location>
        <begin position="1"/>
        <end position="57"/>
    </location>
</feature>
<feature type="transmembrane region" description="Helical" evidence="1">
    <location>
        <begin position="8"/>
        <end position="28"/>
    </location>
</feature>
<feature type="transmembrane region" description="Helical" evidence="1">
    <location>
        <begin position="30"/>
        <end position="50"/>
    </location>
</feature>
<name>Y263_PSEA6</name>
<comment type="subcellular location">
    <subcellularLocation>
        <location evidence="1">Cell membrane</location>
        <topology evidence="1">Multi-pass membrane protein</topology>
    </subcellularLocation>
</comment>
<comment type="similarity">
    <text evidence="1">Belongs to the UPF0391 family.</text>
</comment>
<comment type="sequence caution" evidence="2">
    <conflict type="erroneous initiation">
        <sequence resource="EMBL-CDS" id="ABG38795"/>
    </conflict>
</comment>
<keyword id="KW-1003">Cell membrane</keyword>
<keyword id="KW-0472">Membrane</keyword>
<keyword id="KW-0812">Transmembrane</keyword>
<keyword id="KW-1133">Transmembrane helix</keyword>
<accession>Q15Z93</accession>
<sequence length="57" mass="6154">MLTWALTFFVLGVIAAVFGFGGVIGVAASIAKVIFLLCVAFVVLFSVLAFKQHKRHK</sequence>
<dbReference type="EMBL" id="CP000388">
    <property type="protein sequence ID" value="ABG38795.1"/>
    <property type="status" value="ALT_INIT"/>
    <property type="molecule type" value="Genomic_DNA"/>
</dbReference>
<dbReference type="RefSeq" id="WP_041713142.1">
    <property type="nucleotide sequence ID" value="NC_008228.1"/>
</dbReference>
<dbReference type="STRING" id="342610.Patl_0263"/>
<dbReference type="KEGG" id="pat:Patl_0263"/>
<dbReference type="eggNOG" id="COG5487">
    <property type="taxonomic scope" value="Bacteria"/>
</dbReference>
<dbReference type="HOGENOM" id="CLU_187346_0_0_6"/>
<dbReference type="Proteomes" id="UP000001981">
    <property type="component" value="Chromosome"/>
</dbReference>
<dbReference type="GO" id="GO:0005886">
    <property type="term" value="C:plasma membrane"/>
    <property type="evidence" value="ECO:0007669"/>
    <property type="project" value="UniProtKB-SubCell"/>
</dbReference>
<dbReference type="HAMAP" id="MF_01361">
    <property type="entry name" value="UPF0391"/>
    <property type="match status" value="1"/>
</dbReference>
<dbReference type="InterPro" id="IPR009760">
    <property type="entry name" value="DUF1328"/>
</dbReference>
<dbReference type="Pfam" id="PF07043">
    <property type="entry name" value="DUF1328"/>
    <property type="match status" value="1"/>
</dbReference>
<dbReference type="PIRSF" id="PIRSF036466">
    <property type="entry name" value="UCP036466"/>
    <property type="match status" value="1"/>
</dbReference>
<protein>
    <recommendedName>
        <fullName evidence="1">UPF0391 membrane protein Patl_0263</fullName>
    </recommendedName>
</protein>
<reference key="1">
    <citation type="submission" date="2006-06" db="EMBL/GenBank/DDBJ databases">
        <title>Complete sequence of Pseudoalteromonas atlantica T6c.</title>
        <authorList>
            <consortium name="US DOE Joint Genome Institute"/>
            <person name="Copeland A."/>
            <person name="Lucas S."/>
            <person name="Lapidus A."/>
            <person name="Barry K."/>
            <person name="Detter J.C."/>
            <person name="Glavina del Rio T."/>
            <person name="Hammon N."/>
            <person name="Israni S."/>
            <person name="Dalin E."/>
            <person name="Tice H."/>
            <person name="Pitluck S."/>
            <person name="Saunders E."/>
            <person name="Brettin T."/>
            <person name="Bruce D."/>
            <person name="Han C."/>
            <person name="Tapia R."/>
            <person name="Gilna P."/>
            <person name="Schmutz J."/>
            <person name="Larimer F."/>
            <person name="Land M."/>
            <person name="Hauser L."/>
            <person name="Kyrpides N."/>
            <person name="Kim E."/>
            <person name="Karls A.C."/>
            <person name="Bartlett D."/>
            <person name="Higgins B.P."/>
            <person name="Richardson P."/>
        </authorList>
    </citation>
    <scope>NUCLEOTIDE SEQUENCE [LARGE SCALE GENOMIC DNA]</scope>
    <source>
        <strain>T6c / ATCC BAA-1087</strain>
    </source>
</reference>
<organism>
    <name type="scientific">Pseudoalteromonas atlantica (strain T6c / ATCC BAA-1087)</name>
    <dbReference type="NCBI Taxonomy" id="3042615"/>
    <lineage>
        <taxon>Bacteria</taxon>
        <taxon>Pseudomonadati</taxon>
        <taxon>Pseudomonadota</taxon>
        <taxon>Gammaproteobacteria</taxon>
        <taxon>Alteromonadales</taxon>
        <taxon>Alteromonadaceae</taxon>
        <taxon>Paraglaciecola</taxon>
    </lineage>
</organism>